<sequence length="487" mass="54529">MLPVIALVGRPNVGKSTLFNRLTRTRDALVADFPGLTRDRKYGQANYDGYEFIVVDTGGIDGSEEGIEIEMADQSLLAIEEADIVLFLVDARVGMTVADQAIANHLRKQEKKCFVVANKTDGIDADSNCAEFYQLSLGEIHHIAASHGRGITLLLEQTLQPLIAELAALDEDVSNDDEELIDLYQEDSEDDSHQAFADKPVKLAIIGRPNVGKSTLTNRILGEERVIVYDMPGTTRDSIYIPMTRNDKEYILIDTAGVRKRKKVSDVVEKFSVIKTLQAIEDCNVVLLVVDARAGISDQDLSLLGFALNSGRSLVIAVNKWDGLDDYVKDRIKSELDRRLGFIDFARLHFISALHGTGVGHLFESVDEAYESATKRISTAMLRRIMDMAQADHQPPLVRGRRVKLKYAHAGGYNPPRIVIHGNQVHDLPDSYKRYLMNYYRKALKIMGTPIKIEFREGDNPFAGRVNKITLSQKRKIRAFSKENRNK</sequence>
<comment type="function">
    <text evidence="1">GTPase that plays an essential role in the late steps of ribosome biogenesis.</text>
</comment>
<comment type="subunit">
    <text evidence="1">Associates with the 50S ribosomal subunit.</text>
</comment>
<comment type="similarity">
    <text evidence="1">Belongs to the TRAFAC class TrmE-Era-EngA-EngB-Septin-like GTPase superfamily. EngA (Der) GTPase family.</text>
</comment>
<organism>
    <name type="scientific">Pseudoalteromonas translucida (strain TAC 125)</name>
    <dbReference type="NCBI Taxonomy" id="326442"/>
    <lineage>
        <taxon>Bacteria</taxon>
        <taxon>Pseudomonadati</taxon>
        <taxon>Pseudomonadota</taxon>
        <taxon>Gammaproteobacteria</taxon>
        <taxon>Alteromonadales</taxon>
        <taxon>Pseudoalteromonadaceae</taxon>
        <taxon>Pseudoalteromonas</taxon>
    </lineage>
</organism>
<evidence type="ECO:0000255" key="1">
    <source>
        <dbReference type="HAMAP-Rule" id="MF_00195"/>
    </source>
</evidence>
<dbReference type="EMBL" id="CR954247">
    <property type="protein sequence ID" value="CAI89181.1"/>
    <property type="molecule type" value="Genomic_DNA"/>
</dbReference>
<dbReference type="SMR" id="Q3ICZ9"/>
<dbReference type="STRING" id="326442.PSHAb0134"/>
<dbReference type="KEGG" id="pha:PSHAb0134"/>
<dbReference type="eggNOG" id="COG1160">
    <property type="taxonomic scope" value="Bacteria"/>
</dbReference>
<dbReference type="HOGENOM" id="CLU_016077_5_1_6"/>
<dbReference type="BioCyc" id="PHAL326442:PSHA_RS15510-MONOMER"/>
<dbReference type="Proteomes" id="UP000006843">
    <property type="component" value="Chromosome II"/>
</dbReference>
<dbReference type="GO" id="GO:0016887">
    <property type="term" value="F:ATP hydrolysis activity"/>
    <property type="evidence" value="ECO:0007669"/>
    <property type="project" value="InterPro"/>
</dbReference>
<dbReference type="GO" id="GO:0005525">
    <property type="term" value="F:GTP binding"/>
    <property type="evidence" value="ECO:0007669"/>
    <property type="project" value="UniProtKB-UniRule"/>
</dbReference>
<dbReference type="GO" id="GO:0043022">
    <property type="term" value="F:ribosome binding"/>
    <property type="evidence" value="ECO:0007669"/>
    <property type="project" value="TreeGrafter"/>
</dbReference>
<dbReference type="GO" id="GO:0042254">
    <property type="term" value="P:ribosome biogenesis"/>
    <property type="evidence" value="ECO:0007669"/>
    <property type="project" value="UniProtKB-KW"/>
</dbReference>
<dbReference type="CDD" id="cd01894">
    <property type="entry name" value="EngA1"/>
    <property type="match status" value="1"/>
</dbReference>
<dbReference type="CDD" id="cd01895">
    <property type="entry name" value="EngA2"/>
    <property type="match status" value="1"/>
</dbReference>
<dbReference type="FunFam" id="3.30.300.20:FF:000004">
    <property type="entry name" value="GTPase Der"/>
    <property type="match status" value="1"/>
</dbReference>
<dbReference type="FunFam" id="3.40.50.300:FF:000040">
    <property type="entry name" value="GTPase Der"/>
    <property type="match status" value="1"/>
</dbReference>
<dbReference type="FunFam" id="3.40.50.300:FF:000057">
    <property type="entry name" value="GTPase Der"/>
    <property type="match status" value="1"/>
</dbReference>
<dbReference type="Gene3D" id="3.30.300.20">
    <property type="match status" value="1"/>
</dbReference>
<dbReference type="Gene3D" id="3.40.50.300">
    <property type="entry name" value="P-loop containing nucleotide triphosphate hydrolases"/>
    <property type="match status" value="2"/>
</dbReference>
<dbReference type="HAMAP" id="MF_00195">
    <property type="entry name" value="GTPase_Der"/>
    <property type="match status" value="1"/>
</dbReference>
<dbReference type="InterPro" id="IPR003593">
    <property type="entry name" value="AAA+_ATPase"/>
</dbReference>
<dbReference type="InterPro" id="IPR031166">
    <property type="entry name" value="G_ENGA"/>
</dbReference>
<dbReference type="InterPro" id="IPR006073">
    <property type="entry name" value="GTP-bd"/>
</dbReference>
<dbReference type="InterPro" id="IPR016484">
    <property type="entry name" value="GTPase_Der"/>
</dbReference>
<dbReference type="InterPro" id="IPR032859">
    <property type="entry name" value="KH_dom-like"/>
</dbReference>
<dbReference type="InterPro" id="IPR015946">
    <property type="entry name" value="KH_dom-like_a/b"/>
</dbReference>
<dbReference type="InterPro" id="IPR027417">
    <property type="entry name" value="P-loop_NTPase"/>
</dbReference>
<dbReference type="InterPro" id="IPR005225">
    <property type="entry name" value="Small_GTP-bd"/>
</dbReference>
<dbReference type="NCBIfam" id="TIGR03594">
    <property type="entry name" value="GTPase_EngA"/>
    <property type="match status" value="1"/>
</dbReference>
<dbReference type="NCBIfam" id="TIGR00231">
    <property type="entry name" value="small_GTP"/>
    <property type="match status" value="2"/>
</dbReference>
<dbReference type="PANTHER" id="PTHR43834">
    <property type="entry name" value="GTPASE DER"/>
    <property type="match status" value="1"/>
</dbReference>
<dbReference type="PANTHER" id="PTHR43834:SF6">
    <property type="entry name" value="GTPASE DER"/>
    <property type="match status" value="1"/>
</dbReference>
<dbReference type="Pfam" id="PF14714">
    <property type="entry name" value="KH_dom-like"/>
    <property type="match status" value="1"/>
</dbReference>
<dbReference type="Pfam" id="PF01926">
    <property type="entry name" value="MMR_HSR1"/>
    <property type="match status" value="2"/>
</dbReference>
<dbReference type="PIRSF" id="PIRSF006485">
    <property type="entry name" value="GTP-binding_EngA"/>
    <property type="match status" value="1"/>
</dbReference>
<dbReference type="PRINTS" id="PR00326">
    <property type="entry name" value="GTP1OBG"/>
</dbReference>
<dbReference type="SMART" id="SM00382">
    <property type="entry name" value="AAA"/>
    <property type="match status" value="2"/>
</dbReference>
<dbReference type="SUPFAM" id="SSF52540">
    <property type="entry name" value="P-loop containing nucleoside triphosphate hydrolases"/>
    <property type="match status" value="2"/>
</dbReference>
<dbReference type="PROSITE" id="PS51712">
    <property type="entry name" value="G_ENGA"/>
    <property type="match status" value="2"/>
</dbReference>
<name>DER_PSET1</name>
<keyword id="KW-0342">GTP-binding</keyword>
<keyword id="KW-0547">Nucleotide-binding</keyword>
<keyword id="KW-1185">Reference proteome</keyword>
<keyword id="KW-0677">Repeat</keyword>
<keyword id="KW-0690">Ribosome biogenesis</keyword>
<proteinExistence type="inferred from homology"/>
<reference key="1">
    <citation type="journal article" date="2005" name="Genome Res.">
        <title>Coping with cold: the genome of the versatile marine Antarctica bacterium Pseudoalteromonas haloplanktis TAC125.</title>
        <authorList>
            <person name="Medigue C."/>
            <person name="Krin E."/>
            <person name="Pascal G."/>
            <person name="Barbe V."/>
            <person name="Bernsel A."/>
            <person name="Bertin P.N."/>
            <person name="Cheung F."/>
            <person name="Cruveiller S."/>
            <person name="D'Amico S."/>
            <person name="Duilio A."/>
            <person name="Fang G."/>
            <person name="Feller G."/>
            <person name="Ho C."/>
            <person name="Mangenot S."/>
            <person name="Marino G."/>
            <person name="Nilsson J."/>
            <person name="Parrilli E."/>
            <person name="Rocha E.P.C."/>
            <person name="Rouy Z."/>
            <person name="Sekowska A."/>
            <person name="Tutino M.L."/>
            <person name="Vallenet D."/>
            <person name="von Heijne G."/>
            <person name="Danchin A."/>
        </authorList>
    </citation>
    <scope>NUCLEOTIDE SEQUENCE [LARGE SCALE GENOMIC DNA]</scope>
    <source>
        <strain>TAC 125</strain>
    </source>
</reference>
<gene>
    <name evidence="1" type="primary">der</name>
    <name type="synonym">engA</name>
    <name type="ordered locus">PSHAb0134</name>
</gene>
<feature type="chain" id="PRO_1000011702" description="GTPase Der">
    <location>
        <begin position="1"/>
        <end position="487"/>
    </location>
</feature>
<feature type="domain" description="EngA-type G 1">
    <location>
        <begin position="3"/>
        <end position="166"/>
    </location>
</feature>
<feature type="domain" description="EngA-type G 2">
    <location>
        <begin position="201"/>
        <end position="374"/>
    </location>
</feature>
<feature type="domain" description="KH-like" evidence="1">
    <location>
        <begin position="375"/>
        <end position="459"/>
    </location>
</feature>
<feature type="binding site" evidence="1">
    <location>
        <begin position="9"/>
        <end position="16"/>
    </location>
    <ligand>
        <name>GTP</name>
        <dbReference type="ChEBI" id="CHEBI:37565"/>
        <label>1</label>
    </ligand>
</feature>
<feature type="binding site" evidence="1">
    <location>
        <begin position="56"/>
        <end position="60"/>
    </location>
    <ligand>
        <name>GTP</name>
        <dbReference type="ChEBI" id="CHEBI:37565"/>
        <label>1</label>
    </ligand>
</feature>
<feature type="binding site" evidence="1">
    <location>
        <begin position="118"/>
        <end position="121"/>
    </location>
    <ligand>
        <name>GTP</name>
        <dbReference type="ChEBI" id="CHEBI:37565"/>
        <label>1</label>
    </ligand>
</feature>
<feature type="binding site" evidence="1">
    <location>
        <begin position="207"/>
        <end position="214"/>
    </location>
    <ligand>
        <name>GTP</name>
        <dbReference type="ChEBI" id="CHEBI:37565"/>
        <label>2</label>
    </ligand>
</feature>
<feature type="binding site" evidence="1">
    <location>
        <begin position="254"/>
        <end position="258"/>
    </location>
    <ligand>
        <name>GTP</name>
        <dbReference type="ChEBI" id="CHEBI:37565"/>
        <label>2</label>
    </ligand>
</feature>
<feature type="binding site" evidence="1">
    <location>
        <begin position="319"/>
        <end position="322"/>
    </location>
    <ligand>
        <name>GTP</name>
        <dbReference type="ChEBI" id="CHEBI:37565"/>
        <label>2</label>
    </ligand>
</feature>
<protein>
    <recommendedName>
        <fullName evidence="1">GTPase Der</fullName>
    </recommendedName>
    <alternativeName>
        <fullName evidence="1">GTP-binding protein EngA</fullName>
    </alternativeName>
</protein>
<accession>Q3ICZ9</accession>